<feature type="chain" id="PRO_0000153255" description="Glutamine synthetase">
    <location>
        <begin position="1"/>
        <end position="438" status="greater than"/>
    </location>
</feature>
<feature type="domain" description="GS beta-grasp" evidence="6">
    <location>
        <begin position="14"/>
        <end position="98"/>
    </location>
</feature>
<feature type="domain" description="GS catalytic" evidence="7">
    <location>
        <begin position="106"/>
        <end position="438"/>
    </location>
</feature>
<feature type="binding site" evidence="4">
    <location>
        <position position="130"/>
    </location>
    <ligand>
        <name>Mg(2+)</name>
        <dbReference type="ChEBI" id="CHEBI:18420"/>
        <label>1</label>
    </ligand>
</feature>
<feature type="binding site" evidence="4">
    <location>
        <position position="132"/>
    </location>
    <ligand>
        <name>Mg(2+)</name>
        <dbReference type="ChEBI" id="CHEBI:18420"/>
        <label>2</label>
    </ligand>
</feature>
<feature type="binding site" evidence="4">
    <location>
        <position position="208"/>
    </location>
    <ligand>
        <name>ATP</name>
        <dbReference type="ChEBI" id="CHEBI:30616"/>
    </ligand>
</feature>
<feature type="binding site" evidence="4">
    <location>
        <position position="213"/>
    </location>
    <ligand>
        <name>Mg(2+)</name>
        <dbReference type="ChEBI" id="CHEBI:18420"/>
        <label>2</label>
    </ligand>
</feature>
<feature type="binding site" evidence="4">
    <location>
        <position position="220"/>
    </location>
    <ligand>
        <name>Mg(2+)</name>
        <dbReference type="ChEBI" id="CHEBI:18420"/>
        <label>2</label>
    </ligand>
</feature>
<feature type="binding site" evidence="1">
    <location>
        <begin position="264"/>
        <end position="265"/>
    </location>
    <ligand>
        <name>L-glutamate</name>
        <dbReference type="ChEBI" id="CHEBI:29985"/>
    </ligand>
</feature>
<feature type="binding site" evidence="2">
    <location>
        <position position="265"/>
    </location>
    <ligand>
        <name>L-glutamate</name>
        <dbReference type="ChEBI" id="CHEBI:29985"/>
    </ligand>
</feature>
<feature type="binding site" evidence="4">
    <location>
        <position position="269"/>
    </location>
    <ligand>
        <name>Mg(2+)</name>
        <dbReference type="ChEBI" id="CHEBI:18420"/>
        <label>1</label>
    </ligand>
</feature>
<feature type="binding site" evidence="1">
    <location>
        <begin position="271"/>
        <end position="273"/>
    </location>
    <ligand>
        <name>ATP</name>
        <dbReference type="ChEBI" id="CHEBI:30616"/>
    </ligand>
</feature>
<feature type="binding site" evidence="3">
    <location>
        <position position="273"/>
    </location>
    <ligand>
        <name>ATP</name>
        <dbReference type="ChEBI" id="CHEBI:30616"/>
    </ligand>
</feature>
<feature type="binding site" evidence="1">
    <location>
        <position position="321"/>
    </location>
    <ligand>
        <name>L-glutamate</name>
        <dbReference type="ChEBI" id="CHEBI:29985"/>
    </ligand>
</feature>
<feature type="binding site" evidence="1">
    <location>
        <position position="327"/>
    </location>
    <ligand>
        <name>L-glutamate</name>
        <dbReference type="ChEBI" id="CHEBI:29985"/>
    </ligand>
</feature>
<feature type="binding site" evidence="4">
    <location>
        <position position="339"/>
    </location>
    <ligand>
        <name>ATP</name>
        <dbReference type="ChEBI" id="CHEBI:30616"/>
    </ligand>
</feature>
<feature type="binding site" evidence="4">
    <location>
        <position position="339"/>
    </location>
    <ligand>
        <name>L-glutamate</name>
        <dbReference type="ChEBI" id="CHEBI:29985"/>
    </ligand>
</feature>
<feature type="binding site" evidence="4">
    <location>
        <position position="344"/>
    </location>
    <ligand>
        <name>ATP</name>
        <dbReference type="ChEBI" id="CHEBI:30616"/>
    </ligand>
</feature>
<feature type="binding site" evidence="3">
    <location>
        <position position="352"/>
    </location>
    <ligand>
        <name>ATP</name>
        <dbReference type="ChEBI" id="CHEBI:30616"/>
    </ligand>
</feature>
<feature type="binding site" evidence="4">
    <location>
        <position position="357"/>
    </location>
    <ligand>
        <name>Mg(2+)</name>
        <dbReference type="ChEBI" id="CHEBI:18420"/>
        <label>1</label>
    </ligand>
</feature>
<feature type="binding site" evidence="1">
    <location>
        <position position="359"/>
    </location>
    <ligand>
        <name>L-glutamate</name>
        <dbReference type="ChEBI" id="CHEBI:29985"/>
    </ligand>
</feature>
<feature type="modified residue" description="O-AMP-tyrosine" evidence="4">
    <location>
        <position position="397"/>
    </location>
</feature>
<feature type="non-terminal residue">
    <location>
        <position position="438"/>
    </location>
</feature>
<comment type="function">
    <text evidence="1">Catalyzes the ATP-dependent biosynthesis of glutamine from glutamate and ammonia.</text>
</comment>
<comment type="catalytic activity">
    <reaction evidence="1">
        <text>L-glutamate + NH4(+) + ATP = L-glutamine + ADP + phosphate + H(+)</text>
        <dbReference type="Rhea" id="RHEA:16169"/>
        <dbReference type="ChEBI" id="CHEBI:15378"/>
        <dbReference type="ChEBI" id="CHEBI:28938"/>
        <dbReference type="ChEBI" id="CHEBI:29985"/>
        <dbReference type="ChEBI" id="CHEBI:30616"/>
        <dbReference type="ChEBI" id="CHEBI:43474"/>
        <dbReference type="ChEBI" id="CHEBI:58359"/>
        <dbReference type="ChEBI" id="CHEBI:456216"/>
        <dbReference type="EC" id="6.3.1.2"/>
    </reaction>
</comment>
<comment type="cofactor">
    <cofactor evidence="4">
        <name>Mg(2+)</name>
        <dbReference type="ChEBI" id="CHEBI:18420"/>
    </cofactor>
    <text evidence="4">Binds 2 Mg(2+) ions per subunit.</text>
</comment>
<comment type="activity regulation">
    <text evidence="5">The activity of this enzyme could be controlled by adenylation under conditions of abundant glutamine.</text>
</comment>
<comment type="subunit">
    <text evidence="1">Oligomer of 12 subunits arranged in the form of two hexameric ring.</text>
</comment>
<comment type="subcellular location">
    <subcellularLocation>
        <location evidence="4">Cytoplasm</location>
    </subcellularLocation>
</comment>
<comment type="similarity">
    <text evidence="8">Belongs to the glutamine synthetase family.</text>
</comment>
<gene>
    <name evidence="1" type="primary">glnA</name>
</gene>
<protein>
    <recommendedName>
        <fullName evidence="1">Glutamine synthetase</fullName>
        <shortName evidence="1">GS</shortName>
        <ecNumber evidence="1">6.3.1.2</ecNumber>
    </recommendedName>
    <alternativeName>
        <fullName evidence="8">Glutamate--ammonia ligase</fullName>
    </alternativeName>
    <alternativeName>
        <fullName evidence="1">Glutamine synthetase I beta</fullName>
        <shortName evidence="1">GSI beta</shortName>
    </alternativeName>
</protein>
<sequence>MSAVKKALDLMKAEEVEYVDIRFCDPRGKLQHVTLIADLVDEDFFEEGFMFDGSSIAGWKSIDQSDMKLIPDASSVYIDPFYAEKTMCVHCNVVEPDTAEAYSRDPRIALKAEAYLKASGIGDVAYFGPEAEFFIFDDVRYSVTPAKVAYQIDAEAAAWNTDAEVEMGNLAHRAGHKGGYFPVNPVDEAQDLRGEMLSTMKRMGMKVDKHHHEVATCQHELGLIFGGLTEQADNILKYKYVIHNVAHAYGKTVTFMPKPMKGDNGSGMHVNMSIWKDGKPLFAGDKYADLSQEALYFIGGILKHAKALNALTNPGTNSYKRLIPGFEAPVLRAYSARNRSGCVRIPWTESPKAKRVEARFPDPSANPYLAFAALLMAGLDGIKNKIDPGPASDKDLYDLPPEELAAIPTVCGSLREALTELEKDHDFLLAGDVFTKDQ</sequence>
<accession>P13499</accession>
<reference key="1">
    <citation type="journal article" date="1990" name="J. Bacteriol.">
        <title>Inactivation, sequence, and lacZ fusion analysis of a regulatory locus required for repression of nitrogen fixation genes in Rhodobacter capsulatus.</title>
        <authorList>
            <person name="Kranz R.G."/>
            <person name="Pace V.M."/>
            <person name="Caldicott I.M."/>
        </authorList>
    </citation>
    <scope>NUCLEOTIDE SEQUENCE [GENOMIC DNA] OF 1-130</scope>
</reference>
<reference key="2">
    <citation type="journal article" date="1995" name="J. Bacteriol.">
        <title>Regulation of the glnBA operon of Rhodobacter capsulatus.</title>
        <authorList>
            <person name="Borghese R."/>
            <person name="Wall J.D."/>
        </authorList>
    </citation>
    <scope>NUCLEOTIDE SEQUENCE [GENOMIC DNA] OF 31-438</scope>
    <source>
        <strain>ATCC 33303 / B10</strain>
    </source>
</reference>
<dbReference type="EC" id="6.3.1.2" evidence="1"/>
<dbReference type="EMBL" id="U25953">
    <property type="protein sequence ID" value="AAA87025.1"/>
    <property type="molecule type" value="Genomic_DNA"/>
</dbReference>
<dbReference type="EMBL" id="M28244">
    <property type="protein sequence ID" value="AAA26123.1"/>
    <property type="molecule type" value="Genomic_DNA"/>
</dbReference>
<dbReference type="SMR" id="P13499"/>
<dbReference type="GO" id="GO:0005737">
    <property type="term" value="C:cytoplasm"/>
    <property type="evidence" value="ECO:0007669"/>
    <property type="project" value="UniProtKB-SubCell"/>
</dbReference>
<dbReference type="GO" id="GO:0016020">
    <property type="term" value="C:membrane"/>
    <property type="evidence" value="ECO:0007669"/>
    <property type="project" value="TreeGrafter"/>
</dbReference>
<dbReference type="GO" id="GO:0005524">
    <property type="term" value="F:ATP binding"/>
    <property type="evidence" value="ECO:0007669"/>
    <property type="project" value="UniProtKB-KW"/>
</dbReference>
<dbReference type="GO" id="GO:0004356">
    <property type="term" value="F:glutamine synthetase activity"/>
    <property type="evidence" value="ECO:0007669"/>
    <property type="project" value="UniProtKB-EC"/>
</dbReference>
<dbReference type="GO" id="GO:0046872">
    <property type="term" value="F:metal ion binding"/>
    <property type="evidence" value="ECO:0007669"/>
    <property type="project" value="UniProtKB-KW"/>
</dbReference>
<dbReference type="GO" id="GO:0006542">
    <property type="term" value="P:glutamine biosynthetic process"/>
    <property type="evidence" value="ECO:0007669"/>
    <property type="project" value="InterPro"/>
</dbReference>
<dbReference type="GO" id="GO:0009399">
    <property type="term" value="P:nitrogen fixation"/>
    <property type="evidence" value="ECO:0007669"/>
    <property type="project" value="UniProtKB-KW"/>
</dbReference>
<dbReference type="GO" id="GO:0019740">
    <property type="term" value="P:nitrogen utilization"/>
    <property type="evidence" value="ECO:0007669"/>
    <property type="project" value="TreeGrafter"/>
</dbReference>
<dbReference type="FunFam" id="3.30.590.10:FF:000001">
    <property type="entry name" value="Glutamine synthetase"/>
    <property type="match status" value="1"/>
</dbReference>
<dbReference type="Gene3D" id="3.10.20.70">
    <property type="entry name" value="Glutamine synthetase, N-terminal domain"/>
    <property type="match status" value="1"/>
</dbReference>
<dbReference type="Gene3D" id="3.30.590.10">
    <property type="entry name" value="Glutamine synthetase/guanido kinase, catalytic domain"/>
    <property type="match status" value="1"/>
</dbReference>
<dbReference type="InterPro" id="IPR008147">
    <property type="entry name" value="Gln_synt_N"/>
</dbReference>
<dbReference type="InterPro" id="IPR036651">
    <property type="entry name" value="Gln_synt_N_sf"/>
</dbReference>
<dbReference type="InterPro" id="IPR014746">
    <property type="entry name" value="Gln_synth/guanido_kin_cat_dom"/>
</dbReference>
<dbReference type="InterPro" id="IPR008146">
    <property type="entry name" value="Gln_synth_cat_dom"/>
</dbReference>
<dbReference type="InterPro" id="IPR027303">
    <property type="entry name" value="Gln_synth_gly_rich_site"/>
</dbReference>
<dbReference type="InterPro" id="IPR004809">
    <property type="entry name" value="Gln_synth_I"/>
</dbReference>
<dbReference type="InterPro" id="IPR027302">
    <property type="entry name" value="Gln_synth_N_conserv_site"/>
</dbReference>
<dbReference type="NCBIfam" id="TIGR00653">
    <property type="entry name" value="GlnA"/>
    <property type="match status" value="1"/>
</dbReference>
<dbReference type="PANTHER" id="PTHR43407">
    <property type="entry name" value="GLUTAMINE SYNTHETASE"/>
    <property type="match status" value="1"/>
</dbReference>
<dbReference type="PANTHER" id="PTHR43407:SF2">
    <property type="entry name" value="GLUTAMINE SYNTHETASE"/>
    <property type="match status" value="1"/>
</dbReference>
<dbReference type="Pfam" id="PF00120">
    <property type="entry name" value="Gln-synt_C"/>
    <property type="match status" value="1"/>
</dbReference>
<dbReference type="Pfam" id="PF03951">
    <property type="entry name" value="Gln-synt_N"/>
    <property type="match status" value="1"/>
</dbReference>
<dbReference type="SMART" id="SM01230">
    <property type="entry name" value="Gln-synt_C"/>
    <property type="match status" value="1"/>
</dbReference>
<dbReference type="SUPFAM" id="SSF54368">
    <property type="entry name" value="Glutamine synthetase, N-terminal domain"/>
    <property type="match status" value="1"/>
</dbReference>
<dbReference type="SUPFAM" id="SSF55931">
    <property type="entry name" value="Glutamine synthetase/guanido kinase"/>
    <property type="match status" value="1"/>
</dbReference>
<dbReference type="PROSITE" id="PS00180">
    <property type="entry name" value="GLNA_1"/>
    <property type="match status" value="1"/>
</dbReference>
<dbReference type="PROSITE" id="PS00181">
    <property type="entry name" value="GLNA_ATP"/>
    <property type="match status" value="1"/>
</dbReference>
<dbReference type="PROSITE" id="PS51986">
    <property type="entry name" value="GS_BETA_GRASP"/>
    <property type="match status" value="1"/>
</dbReference>
<dbReference type="PROSITE" id="PS51987">
    <property type="entry name" value="GS_CATALYTIC"/>
    <property type="match status" value="1"/>
</dbReference>
<name>GLN1B_RHOCA</name>
<evidence type="ECO:0000250" key="1">
    <source>
        <dbReference type="UniProtKB" id="P0A1P6"/>
    </source>
</evidence>
<evidence type="ECO:0000250" key="2">
    <source>
        <dbReference type="UniProtKB" id="P12425"/>
    </source>
</evidence>
<evidence type="ECO:0000250" key="3">
    <source>
        <dbReference type="UniProtKB" id="P77961"/>
    </source>
</evidence>
<evidence type="ECO:0000250" key="4">
    <source>
        <dbReference type="UniProtKB" id="P9WN39"/>
    </source>
</evidence>
<evidence type="ECO:0000250" key="5">
    <source>
        <dbReference type="UniProtKB" id="Q3V5W6"/>
    </source>
</evidence>
<evidence type="ECO:0000255" key="6">
    <source>
        <dbReference type="PROSITE-ProRule" id="PRU01330"/>
    </source>
</evidence>
<evidence type="ECO:0000255" key="7">
    <source>
        <dbReference type="PROSITE-ProRule" id="PRU01331"/>
    </source>
</evidence>
<evidence type="ECO:0000305" key="8"/>
<keyword id="KW-0067">ATP-binding</keyword>
<keyword id="KW-0963">Cytoplasm</keyword>
<keyword id="KW-0436">Ligase</keyword>
<keyword id="KW-0460">Magnesium</keyword>
<keyword id="KW-0479">Metal-binding</keyword>
<keyword id="KW-0535">Nitrogen fixation</keyword>
<keyword id="KW-0547">Nucleotide-binding</keyword>
<keyword id="KW-0597">Phosphoprotein</keyword>
<organism>
    <name type="scientific">Rhodobacter capsulatus</name>
    <name type="common">Rhodopseudomonas capsulata</name>
    <dbReference type="NCBI Taxonomy" id="1061"/>
    <lineage>
        <taxon>Bacteria</taxon>
        <taxon>Pseudomonadati</taxon>
        <taxon>Pseudomonadota</taxon>
        <taxon>Alphaproteobacteria</taxon>
        <taxon>Rhodobacterales</taxon>
        <taxon>Rhodobacter group</taxon>
        <taxon>Rhodobacter</taxon>
    </lineage>
</organism>
<proteinExistence type="inferred from homology"/>